<accession>A0M7D0</accession>
<organism>
    <name type="scientific">Christiangramia forsetii (strain DSM 17595 / CGMCC 1.15422 / KT0803)</name>
    <name type="common">Gramella forsetii</name>
    <dbReference type="NCBI Taxonomy" id="411154"/>
    <lineage>
        <taxon>Bacteria</taxon>
        <taxon>Pseudomonadati</taxon>
        <taxon>Bacteroidota</taxon>
        <taxon>Flavobacteriia</taxon>
        <taxon>Flavobacteriales</taxon>
        <taxon>Flavobacteriaceae</taxon>
        <taxon>Christiangramia</taxon>
    </lineage>
</organism>
<sequence length="86" mass="9319">MAHKKGVGSSKNGRESESKRLGVKIFGGQAAIAGNIIVRQRGTAHRPGDNVYAGKDHTLHARVDGLVKFTKKKDDKSYVSIEPFEA</sequence>
<proteinExistence type="inferred from homology"/>
<name>RL27_CHRFK</name>
<gene>
    <name evidence="1" type="primary">rpmA</name>
    <name type="ordered locus">GFO_3587</name>
</gene>
<keyword id="KW-0687">Ribonucleoprotein</keyword>
<keyword id="KW-0689">Ribosomal protein</keyword>
<feature type="chain" id="PRO_1000017489" description="Large ribosomal subunit protein bL27">
    <location>
        <begin position="1"/>
        <end position="86"/>
    </location>
</feature>
<comment type="similarity">
    <text evidence="1">Belongs to the bacterial ribosomal protein bL27 family.</text>
</comment>
<reference key="1">
    <citation type="journal article" date="2006" name="Environ. Microbiol.">
        <title>Whole genome analysis of the marine Bacteroidetes'Gramella forsetii' reveals adaptations to degradation of polymeric organic matter.</title>
        <authorList>
            <person name="Bauer M."/>
            <person name="Kube M."/>
            <person name="Teeling H."/>
            <person name="Richter M."/>
            <person name="Lombardot T."/>
            <person name="Allers E."/>
            <person name="Wuerdemann C.A."/>
            <person name="Quast C."/>
            <person name="Kuhl H."/>
            <person name="Knaust F."/>
            <person name="Woebken D."/>
            <person name="Bischof K."/>
            <person name="Mussmann M."/>
            <person name="Choudhuri J.V."/>
            <person name="Meyer F."/>
            <person name="Reinhardt R."/>
            <person name="Amann R.I."/>
            <person name="Gloeckner F.O."/>
        </authorList>
    </citation>
    <scope>NUCLEOTIDE SEQUENCE [LARGE SCALE GENOMIC DNA]</scope>
    <source>
        <strain>DSM 17595 / CGMCC 1.15422 / KT0803</strain>
    </source>
</reference>
<evidence type="ECO:0000255" key="1">
    <source>
        <dbReference type="HAMAP-Rule" id="MF_00539"/>
    </source>
</evidence>
<evidence type="ECO:0000305" key="2"/>
<protein>
    <recommendedName>
        <fullName evidence="1">Large ribosomal subunit protein bL27</fullName>
    </recommendedName>
    <alternativeName>
        <fullName evidence="2">50S ribosomal protein L27</fullName>
    </alternativeName>
</protein>
<dbReference type="EMBL" id="CU207366">
    <property type="protein sequence ID" value="CAL68525.1"/>
    <property type="molecule type" value="Genomic_DNA"/>
</dbReference>
<dbReference type="RefSeq" id="WP_011711426.1">
    <property type="nucleotide sequence ID" value="NC_008571.1"/>
</dbReference>
<dbReference type="SMR" id="A0M7D0"/>
<dbReference type="STRING" id="411154.GFO_3587"/>
<dbReference type="KEGG" id="gfo:GFO_3587"/>
<dbReference type="eggNOG" id="COG0211">
    <property type="taxonomic scope" value="Bacteria"/>
</dbReference>
<dbReference type="HOGENOM" id="CLU_095424_4_0_10"/>
<dbReference type="OrthoDB" id="9803474at2"/>
<dbReference type="Proteomes" id="UP000000755">
    <property type="component" value="Chromosome"/>
</dbReference>
<dbReference type="GO" id="GO:0022625">
    <property type="term" value="C:cytosolic large ribosomal subunit"/>
    <property type="evidence" value="ECO:0007669"/>
    <property type="project" value="TreeGrafter"/>
</dbReference>
<dbReference type="GO" id="GO:0003735">
    <property type="term" value="F:structural constituent of ribosome"/>
    <property type="evidence" value="ECO:0007669"/>
    <property type="project" value="InterPro"/>
</dbReference>
<dbReference type="GO" id="GO:0006412">
    <property type="term" value="P:translation"/>
    <property type="evidence" value="ECO:0007669"/>
    <property type="project" value="UniProtKB-UniRule"/>
</dbReference>
<dbReference type="FunFam" id="2.40.50.100:FF:000060">
    <property type="entry name" value="Apicoplast ribosomal protein L27"/>
    <property type="match status" value="1"/>
</dbReference>
<dbReference type="Gene3D" id="2.40.50.100">
    <property type="match status" value="1"/>
</dbReference>
<dbReference type="HAMAP" id="MF_00539">
    <property type="entry name" value="Ribosomal_bL27"/>
    <property type="match status" value="1"/>
</dbReference>
<dbReference type="InterPro" id="IPR001684">
    <property type="entry name" value="Ribosomal_bL27"/>
</dbReference>
<dbReference type="InterPro" id="IPR018261">
    <property type="entry name" value="Ribosomal_bL27_CS"/>
</dbReference>
<dbReference type="NCBIfam" id="TIGR00062">
    <property type="entry name" value="L27"/>
    <property type="match status" value="1"/>
</dbReference>
<dbReference type="PANTHER" id="PTHR15893:SF0">
    <property type="entry name" value="LARGE RIBOSOMAL SUBUNIT PROTEIN BL27M"/>
    <property type="match status" value="1"/>
</dbReference>
<dbReference type="PANTHER" id="PTHR15893">
    <property type="entry name" value="RIBOSOMAL PROTEIN L27"/>
    <property type="match status" value="1"/>
</dbReference>
<dbReference type="Pfam" id="PF01016">
    <property type="entry name" value="Ribosomal_L27"/>
    <property type="match status" value="1"/>
</dbReference>
<dbReference type="PRINTS" id="PR00063">
    <property type="entry name" value="RIBOSOMALL27"/>
</dbReference>
<dbReference type="SUPFAM" id="SSF110324">
    <property type="entry name" value="Ribosomal L27 protein-like"/>
    <property type="match status" value="1"/>
</dbReference>
<dbReference type="PROSITE" id="PS00831">
    <property type="entry name" value="RIBOSOMAL_L27"/>
    <property type="match status" value="1"/>
</dbReference>